<comment type="function">
    <text evidence="1">Catalyzes the synthesis of GMP from XMP.</text>
</comment>
<comment type="catalytic activity">
    <reaction evidence="1">
        <text>XMP + L-glutamine + ATP + H2O = GMP + L-glutamate + AMP + diphosphate + 2 H(+)</text>
        <dbReference type="Rhea" id="RHEA:11680"/>
        <dbReference type="ChEBI" id="CHEBI:15377"/>
        <dbReference type="ChEBI" id="CHEBI:15378"/>
        <dbReference type="ChEBI" id="CHEBI:29985"/>
        <dbReference type="ChEBI" id="CHEBI:30616"/>
        <dbReference type="ChEBI" id="CHEBI:33019"/>
        <dbReference type="ChEBI" id="CHEBI:57464"/>
        <dbReference type="ChEBI" id="CHEBI:58115"/>
        <dbReference type="ChEBI" id="CHEBI:58359"/>
        <dbReference type="ChEBI" id="CHEBI:456215"/>
        <dbReference type="EC" id="6.3.5.2"/>
    </reaction>
</comment>
<comment type="pathway">
    <text evidence="1">Purine metabolism; GMP biosynthesis; GMP from XMP (L-Gln route): step 1/1.</text>
</comment>
<comment type="subunit">
    <text evidence="1">Homodimer.</text>
</comment>
<sequence length="524" mass="58682">MLKDIHQHRILILDFGSQYAQLIARRVREIGVYCELMPCDIDEETIRDFNPHGIILSGGPETVTLSHTLRAPAFIFEIGCPVLGICYGMQTMAYQLGGKVNRTAKAEFGHAQLRVLNPAFLFDGIEDQVSPQGEPLLDVWMSHGDIVSELPPGFEATACTDNSPLAAMADFKRRFFGLQFHPEVTHTPQGHRILAHFVIHICQCIPNWTTKHIIEDSIRDIQEKVGKEQVIVGLSGGVDSAVTATLVHKAIGDQLVCVLVDTGLLRLNEVDEVLNVFQKHLGAKVICVDAKDRFMKALKGISDPEEKRKIAGEQFIRVFEEQAKKLNVKWLGQGTIYPDVIESAKTKTGKGHIIKTHHNVGGLPLNMELKLIEPLRELFKDEVRKLGLELGLPADLIYRHPFPGPGLAIRILGEVSAEYINILKQADAIFIEELKKSDYYHQVSQAFAVFMPLKSVGVKGDARHYGYIIALRAVKTVDFMTAQWADLPHEFLSKVSHRIVNEIKEVSRVVYDMTNKPPATIEWE</sequence>
<gene>
    <name evidence="1" type="primary">guaA</name>
    <name type="ordered locus">CBU_1341</name>
</gene>
<accession>Q83BZ6</accession>
<proteinExistence type="evidence at protein level"/>
<name>GUAA_COXBU</name>
<reference key="1">
    <citation type="journal article" date="2003" name="Proc. Natl. Acad. Sci. U.S.A.">
        <title>Complete genome sequence of the Q-fever pathogen, Coxiella burnetii.</title>
        <authorList>
            <person name="Seshadri R."/>
            <person name="Paulsen I.T."/>
            <person name="Eisen J.A."/>
            <person name="Read T.D."/>
            <person name="Nelson K.E."/>
            <person name="Nelson W.C."/>
            <person name="Ward N.L."/>
            <person name="Tettelin H."/>
            <person name="Davidsen T.M."/>
            <person name="Beanan M.J."/>
            <person name="DeBoy R.T."/>
            <person name="Daugherty S.C."/>
            <person name="Brinkac L.M."/>
            <person name="Madupu R."/>
            <person name="Dodson R.J."/>
            <person name="Khouri H.M."/>
            <person name="Lee K.H."/>
            <person name="Carty H.A."/>
            <person name="Scanlan D."/>
            <person name="Heinzen R.A."/>
            <person name="Thompson H.A."/>
            <person name="Samuel J.E."/>
            <person name="Fraser C.M."/>
            <person name="Heidelberg J.F."/>
        </authorList>
    </citation>
    <scope>NUCLEOTIDE SEQUENCE [LARGE SCALE GENOMIC DNA]</scope>
    <source>
        <strain>RSA 493 / Nine Mile phase I</strain>
    </source>
</reference>
<evidence type="ECO:0000255" key="1">
    <source>
        <dbReference type="HAMAP-Rule" id="MF_00344"/>
    </source>
</evidence>
<evidence type="ECO:0007829" key="2">
    <source>
        <dbReference type="PDB" id="3TQI"/>
    </source>
</evidence>
<dbReference type="EC" id="6.3.5.2" evidence="1"/>
<dbReference type="EMBL" id="AE016828">
    <property type="protein sequence ID" value="AAO90844.1"/>
    <property type="molecule type" value="Genomic_DNA"/>
</dbReference>
<dbReference type="RefSeq" id="NP_820330.1">
    <property type="nucleotide sequence ID" value="NC_002971.4"/>
</dbReference>
<dbReference type="RefSeq" id="WP_010958163.1">
    <property type="nucleotide sequence ID" value="NC_002971.4"/>
</dbReference>
<dbReference type="PDB" id="3TQI">
    <property type="method" value="X-ray"/>
    <property type="resolution" value="2.84 A"/>
    <property type="chains" value="A/B/C/D=1-524"/>
</dbReference>
<dbReference type="PDBsum" id="3TQI"/>
<dbReference type="SMR" id="Q83BZ6"/>
<dbReference type="STRING" id="227377.CBU_1341"/>
<dbReference type="DNASU" id="1209247"/>
<dbReference type="EnsemblBacteria" id="AAO90844">
    <property type="protein sequence ID" value="AAO90844"/>
    <property type="gene ID" value="CBU_1341"/>
</dbReference>
<dbReference type="GeneID" id="1209247"/>
<dbReference type="KEGG" id="cbu:CBU_1341"/>
<dbReference type="PATRIC" id="fig|227377.7.peg.1333"/>
<dbReference type="eggNOG" id="COG0518">
    <property type="taxonomic scope" value="Bacteria"/>
</dbReference>
<dbReference type="eggNOG" id="COG0519">
    <property type="taxonomic scope" value="Bacteria"/>
</dbReference>
<dbReference type="HOGENOM" id="CLU_014340_0_5_6"/>
<dbReference type="OrthoDB" id="9802219at2"/>
<dbReference type="UniPathway" id="UPA00189">
    <property type="reaction ID" value="UER00296"/>
</dbReference>
<dbReference type="EvolutionaryTrace" id="Q83BZ6"/>
<dbReference type="Proteomes" id="UP000002671">
    <property type="component" value="Chromosome"/>
</dbReference>
<dbReference type="GO" id="GO:0005829">
    <property type="term" value="C:cytosol"/>
    <property type="evidence" value="ECO:0000318"/>
    <property type="project" value="GO_Central"/>
</dbReference>
<dbReference type="GO" id="GO:0005524">
    <property type="term" value="F:ATP binding"/>
    <property type="evidence" value="ECO:0007669"/>
    <property type="project" value="UniProtKB-UniRule"/>
</dbReference>
<dbReference type="GO" id="GO:0003921">
    <property type="term" value="F:GMP synthase activity"/>
    <property type="evidence" value="ECO:0000318"/>
    <property type="project" value="GO_Central"/>
</dbReference>
<dbReference type="GO" id="GO:0006177">
    <property type="term" value="P:GMP biosynthetic process"/>
    <property type="evidence" value="ECO:0000318"/>
    <property type="project" value="GO_Central"/>
</dbReference>
<dbReference type="CDD" id="cd01742">
    <property type="entry name" value="GATase1_GMP_Synthase"/>
    <property type="match status" value="1"/>
</dbReference>
<dbReference type="CDD" id="cd01997">
    <property type="entry name" value="GMP_synthase_C"/>
    <property type="match status" value="1"/>
</dbReference>
<dbReference type="FunFam" id="3.30.300.10:FF:000002">
    <property type="entry name" value="GMP synthase [glutamine-hydrolyzing]"/>
    <property type="match status" value="1"/>
</dbReference>
<dbReference type="FunFam" id="3.40.50.620:FF:000001">
    <property type="entry name" value="GMP synthase [glutamine-hydrolyzing]"/>
    <property type="match status" value="1"/>
</dbReference>
<dbReference type="FunFam" id="3.40.50.880:FF:000001">
    <property type="entry name" value="GMP synthase [glutamine-hydrolyzing]"/>
    <property type="match status" value="1"/>
</dbReference>
<dbReference type="Gene3D" id="3.30.300.10">
    <property type="match status" value="1"/>
</dbReference>
<dbReference type="Gene3D" id="3.40.50.880">
    <property type="match status" value="1"/>
</dbReference>
<dbReference type="Gene3D" id="3.40.50.620">
    <property type="entry name" value="HUPs"/>
    <property type="match status" value="1"/>
</dbReference>
<dbReference type="HAMAP" id="MF_00344">
    <property type="entry name" value="GMP_synthase"/>
    <property type="match status" value="1"/>
</dbReference>
<dbReference type="InterPro" id="IPR029062">
    <property type="entry name" value="Class_I_gatase-like"/>
</dbReference>
<dbReference type="InterPro" id="IPR017926">
    <property type="entry name" value="GATASE"/>
</dbReference>
<dbReference type="InterPro" id="IPR001674">
    <property type="entry name" value="GMP_synth_C"/>
</dbReference>
<dbReference type="InterPro" id="IPR004739">
    <property type="entry name" value="GMP_synth_GATase"/>
</dbReference>
<dbReference type="InterPro" id="IPR022955">
    <property type="entry name" value="GMP_synthase"/>
</dbReference>
<dbReference type="InterPro" id="IPR025777">
    <property type="entry name" value="GMPS_ATP_PPase_dom"/>
</dbReference>
<dbReference type="InterPro" id="IPR022310">
    <property type="entry name" value="NAD/GMP_synthase"/>
</dbReference>
<dbReference type="InterPro" id="IPR014729">
    <property type="entry name" value="Rossmann-like_a/b/a_fold"/>
</dbReference>
<dbReference type="NCBIfam" id="TIGR00884">
    <property type="entry name" value="guaA_Cterm"/>
    <property type="match status" value="1"/>
</dbReference>
<dbReference type="NCBIfam" id="TIGR00888">
    <property type="entry name" value="guaA_Nterm"/>
    <property type="match status" value="1"/>
</dbReference>
<dbReference type="NCBIfam" id="NF000848">
    <property type="entry name" value="PRK00074.1"/>
    <property type="match status" value="1"/>
</dbReference>
<dbReference type="PANTHER" id="PTHR11922:SF2">
    <property type="entry name" value="GMP SYNTHASE [GLUTAMINE-HYDROLYZING]"/>
    <property type="match status" value="1"/>
</dbReference>
<dbReference type="PANTHER" id="PTHR11922">
    <property type="entry name" value="GMP SYNTHASE-RELATED"/>
    <property type="match status" value="1"/>
</dbReference>
<dbReference type="Pfam" id="PF00117">
    <property type="entry name" value="GATase"/>
    <property type="match status" value="1"/>
</dbReference>
<dbReference type="Pfam" id="PF00958">
    <property type="entry name" value="GMP_synt_C"/>
    <property type="match status" value="1"/>
</dbReference>
<dbReference type="Pfam" id="PF02540">
    <property type="entry name" value="NAD_synthase"/>
    <property type="match status" value="1"/>
</dbReference>
<dbReference type="PRINTS" id="PR00097">
    <property type="entry name" value="ANTSNTHASEII"/>
</dbReference>
<dbReference type="PRINTS" id="PR00099">
    <property type="entry name" value="CPSGATASE"/>
</dbReference>
<dbReference type="PRINTS" id="PR00096">
    <property type="entry name" value="GATASE"/>
</dbReference>
<dbReference type="SUPFAM" id="SSF52402">
    <property type="entry name" value="Adenine nucleotide alpha hydrolases-like"/>
    <property type="match status" value="1"/>
</dbReference>
<dbReference type="SUPFAM" id="SSF52317">
    <property type="entry name" value="Class I glutamine amidotransferase-like"/>
    <property type="match status" value="1"/>
</dbReference>
<dbReference type="SUPFAM" id="SSF54810">
    <property type="entry name" value="GMP synthetase C-terminal dimerisation domain"/>
    <property type="match status" value="1"/>
</dbReference>
<dbReference type="PROSITE" id="PS51273">
    <property type="entry name" value="GATASE_TYPE_1"/>
    <property type="match status" value="1"/>
</dbReference>
<dbReference type="PROSITE" id="PS51553">
    <property type="entry name" value="GMPS_ATP_PPASE"/>
    <property type="match status" value="1"/>
</dbReference>
<organism>
    <name type="scientific">Coxiella burnetii (strain RSA 493 / Nine Mile phase I)</name>
    <dbReference type="NCBI Taxonomy" id="227377"/>
    <lineage>
        <taxon>Bacteria</taxon>
        <taxon>Pseudomonadati</taxon>
        <taxon>Pseudomonadota</taxon>
        <taxon>Gammaproteobacteria</taxon>
        <taxon>Legionellales</taxon>
        <taxon>Coxiellaceae</taxon>
        <taxon>Coxiella</taxon>
    </lineage>
</organism>
<protein>
    <recommendedName>
        <fullName evidence="1">GMP synthase [glutamine-hydrolyzing]</fullName>
        <ecNumber evidence="1">6.3.5.2</ecNumber>
    </recommendedName>
    <alternativeName>
        <fullName evidence="1">GMP synthetase</fullName>
    </alternativeName>
    <alternativeName>
        <fullName evidence="1">Glutamine amidotransferase</fullName>
    </alternativeName>
</protein>
<feature type="chain" id="PRO_0000140120" description="GMP synthase [glutamine-hydrolyzing]">
    <location>
        <begin position="1"/>
        <end position="524"/>
    </location>
</feature>
<feature type="domain" description="Glutamine amidotransferase type-1" evidence="1">
    <location>
        <begin position="9"/>
        <end position="207"/>
    </location>
</feature>
<feature type="domain" description="GMPS ATP-PPase" evidence="1">
    <location>
        <begin position="208"/>
        <end position="399"/>
    </location>
</feature>
<feature type="active site" description="Nucleophile" evidence="1">
    <location>
        <position position="86"/>
    </location>
</feature>
<feature type="active site" evidence="1">
    <location>
        <position position="181"/>
    </location>
</feature>
<feature type="active site" evidence="1">
    <location>
        <position position="183"/>
    </location>
</feature>
<feature type="binding site" evidence="1">
    <location>
        <begin position="235"/>
        <end position="241"/>
    </location>
    <ligand>
        <name>ATP</name>
        <dbReference type="ChEBI" id="CHEBI:30616"/>
    </ligand>
</feature>
<feature type="strand" evidence="2">
    <location>
        <begin position="8"/>
        <end position="14"/>
    </location>
</feature>
<feature type="helix" evidence="2">
    <location>
        <begin position="20"/>
        <end position="30"/>
    </location>
</feature>
<feature type="strand" evidence="2">
    <location>
        <begin position="33"/>
        <end position="38"/>
    </location>
</feature>
<feature type="strand" evidence="2">
    <location>
        <begin position="43"/>
        <end position="46"/>
    </location>
</feature>
<feature type="turn" evidence="2">
    <location>
        <begin position="47"/>
        <end position="49"/>
    </location>
</feature>
<feature type="strand" evidence="2">
    <location>
        <begin position="52"/>
        <end position="56"/>
    </location>
</feature>
<feature type="turn" evidence="2">
    <location>
        <begin position="75"/>
        <end position="77"/>
    </location>
</feature>
<feature type="strand" evidence="2">
    <location>
        <begin position="78"/>
        <end position="80"/>
    </location>
</feature>
<feature type="strand" evidence="2">
    <location>
        <begin position="82"/>
        <end position="85"/>
    </location>
</feature>
<feature type="helix" evidence="2">
    <location>
        <begin position="87"/>
        <end position="95"/>
    </location>
</feature>
<feature type="strand" evidence="2">
    <location>
        <begin position="96"/>
        <end position="98"/>
    </location>
</feature>
<feature type="strand" evidence="2">
    <location>
        <begin position="108"/>
        <end position="117"/>
    </location>
</feature>
<feature type="turn" evidence="2">
    <location>
        <begin position="119"/>
        <end position="122"/>
    </location>
</feature>
<feature type="strand" evidence="2">
    <location>
        <begin position="136"/>
        <end position="145"/>
    </location>
</feature>
<feature type="strand" evidence="2">
    <location>
        <begin position="155"/>
        <end position="160"/>
    </location>
</feature>
<feature type="strand" evidence="2">
    <location>
        <begin position="163"/>
        <end position="169"/>
    </location>
</feature>
<feature type="strand" evidence="2">
    <location>
        <begin position="171"/>
        <end position="173"/>
    </location>
</feature>
<feature type="strand" evidence="2">
    <location>
        <begin position="175"/>
        <end position="180"/>
    </location>
</feature>
<feature type="strand" evidence="2">
    <location>
        <begin position="182"/>
        <end position="184"/>
    </location>
</feature>
<feature type="helix" evidence="2">
    <location>
        <begin position="190"/>
        <end position="199"/>
    </location>
</feature>
<feature type="helix" evidence="2">
    <location>
        <begin position="211"/>
        <end position="225"/>
    </location>
</feature>
<feature type="strand" evidence="2">
    <location>
        <begin position="230"/>
        <end position="233"/>
    </location>
</feature>
<feature type="turn" evidence="2">
    <location>
        <begin position="235"/>
        <end position="237"/>
    </location>
</feature>
<feature type="helix" evidence="2">
    <location>
        <begin position="238"/>
        <end position="251"/>
    </location>
</feature>
<feature type="helix" evidence="2">
    <location>
        <begin position="252"/>
        <end position="254"/>
    </location>
</feature>
<feature type="strand" evidence="2">
    <location>
        <begin position="255"/>
        <end position="260"/>
    </location>
</feature>
<feature type="helix" evidence="2">
    <location>
        <begin position="269"/>
        <end position="277"/>
    </location>
</feature>
<feature type="strand" evidence="2">
    <location>
        <begin position="284"/>
        <end position="288"/>
    </location>
</feature>
<feature type="helix" evidence="2">
    <location>
        <begin position="291"/>
        <end position="295"/>
    </location>
</feature>
<feature type="strand" evidence="2">
    <location>
        <begin position="296"/>
        <end position="300"/>
    </location>
</feature>
<feature type="helix" evidence="2">
    <location>
        <begin position="304"/>
        <end position="321"/>
    </location>
</feature>
<feature type="turn" evidence="2">
    <location>
        <begin position="322"/>
        <end position="327"/>
    </location>
</feature>
<feature type="strand" evidence="2">
    <location>
        <begin position="330"/>
        <end position="332"/>
    </location>
</feature>
<feature type="helix" evidence="2">
    <location>
        <begin position="337"/>
        <end position="341"/>
    </location>
</feature>
<feature type="turn" evidence="2">
    <location>
        <begin position="374"/>
        <end position="377"/>
    </location>
</feature>
<feature type="helix" evidence="2">
    <location>
        <begin position="380"/>
        <end position="390"/>
    </location>
</feature>
<feature type="helix" evidence="2">
    <location>
        <begin position="394"/>
        <end position="397"/>
    </location>
</feature>
<feature type="helix" evidence="2">
    <location>
        <begin position="406"/>
        <end position="408"/>
    </location>
</feature>
<feature type="strand" evidence="2">
    <location>
        <begin position="409"/>
        <end position="411"/>
    </location>
</feature>
<feature type="helix" evidence="2">
    <location>
        <begin position="418"/>
        <end position="435"/>
    </location>
</feature>
<feature type="turn" evidence="2">
    <location>
        <begin position="436"/>
        <end position="438"/>
    </location>
</feature>
<feature type="helix" evidence="2">
    <location>
        <begin position="440"/>
        <end position="442"/>
    </location>
</feature>
<feature type="strand" evidence="2">
    <location>
        <begin position="443"/>
        <end position="455"/>
    </location>
</feature>
<feature type="strand" evidence="2">
    <location>
        <begin position="466"/>
        <end position="474"/>
    </location>
</feature>
<feature type="helix" evidence="2">
    <location>
        <begin position="489"/>
        <end position="502"/>
    </location>
</feature>
<feature type="strand" evidence="2">
    <location>
        <begin position="503"/>
        <end position="505"/>
    </location>
</feature>
<feature type="strand" evidence="2">
    <location>
        <begin position="509"/>
        <end position="512"/>
    </location>
</feature>
<feature type="turn" evidence="2">
    <location>
        <begin position="516"/>
        <end position="518"/>
    </location>
</feature>
<keyword id="KW-0002">3D-structure</keyword>
<keyword id="KW-0067">ATP-binding</keyword>
<keyword id="KW-0315">Glutamine amidotransferase</keyword>
<keyword id="KW-0332">GMP biosynthesis</keyword>
<keyword id="KW-0436">Ligase</keyword>
<keyword id="KW-0547">Nucleotide-binding</keyword>
<keyword id="KW-0658">Purine biosynthesis</keyword>
<keyword id="KW-1185">Reference proteome</keyword>